<dbReference type="EC" id="2.1.2.9" evidence="1"/>
<dbReference type="EMBL" id="AE014299">
    <property type="protein sequence ID" value="AAN53118.1"/>
    <property type="molecule type" value="Genomic_DNA"/>
</dbReference>
<dbReference type="RefSeq" id="NP_715673.1">
    <property type="nucleotide sequence ID" value="NC_004347.2"/>
</dbReference>
<dbReference type="RefSeq" id="WP_011070447.1">
    <property type="nucleotide sequence ID" value="NC_004347.2"/>
</dbReference>
<dbReference type="SMR" id="Q8EKQ9"/>
<dbReference type="STRING" id="211586.SO_0031"/>
<dbReference type="PaxDb" id="211586-SO_0031"/>
<dbReference type="KEGG" id="son:SO_0031"/>
<dbReference type="PATRIC" id="fig|211586.12.peg.31"/>
<dbReference type="eggNOG" id="COG0223">
    <property type="taxonomic scope" value="Bacteria"/>
</dbReference>
<dbReference type="HOGENOM" id="CLU_033347_1_2_6"/>
<dbReference type="OrthoDB" id="9802815at2"/>
<dbReference type="PhylomeDB" id="Q8EKQ9"/>
<dbReference type="BioCyc" id="SONE211586:G1GMP-31-MONOMER"/>
<dbReference type="Proteomes" id="UP000008186">
    <property type="component" value="Chromosome"/>
</dbReference>
<dbReference type="GO" id="GO:0005829">
    <property type="term" value="C:cytosol"/>
    <property type="evidence" value="ECO:0000318"/>
    <property type="project" value="GO_Central"/>
</dbReference>
<dbReference type="GO" id="GO:0004479">
    <property type="term" value="F:methionyl-tRNA formyltransferase activity"/>
    <property type="evidence" value="ECO:0000318"/>
    <property type="project" value="GO_Central"/>
</dbReference>
<dbReference type="GO" id="GO:0071951">
    <property type="term" value="P:conversion of methionyl-tRNA to N-formyl-methionyl-tRNA"/>
    <property type="evidence" value="ECO:0000318"/>
    <property type="project" value="GO_Central"/>
</dbReference>
<dbReference type="CDD" id="cd08646">
    <property type="entry name" value="FMT_core_Met-tRNA-FMT_N"/>
    <property type="match status" value="1"/>
</dbReference>
<dbReference type="CDD" id="cd08704">
    <property type="entry name" value="Met_tRNA_FMT_C"/>
    <property type="match status" value="1"/>
</dbReference>
<dbReference type="FunFam" id="3.10.25.10:FF:000001">
    <property type="entry name" value="Methionyl-tRNA formyltransferase"/>
    <property type="match status" value="1"/>
</dbReference>
<dbReference type="FunFam" id="3.40.50.12230:FF:000001">
    <property type="entry name" value="Methionyl-tRNA formyltransferase"/>
    <property type="match status" value="1"/>
</dbReference>
<dbReference type="FunFam" id="3.40.50.170:FF:000003">
    <property type="entry name" value="Methionyl-tRNA formyltransferase"/>
    <property type="match status" value="1"/>
</dbReference>
<dbReference type="Gene3D" id="3.10.25.10">
    <property type="entry name" value="Formyl transferase, C-terminal domain"/>
    <property type="match status" value="1"/>
</dbReference>
<dbReference type="Gene3D" id="3.40.50.170">
    <property type="entry name" value="Formyl transferase, N-terminal domain"/>
    <property type="match status" value="1"/>
</dbReference>
<dbReference type="HAMAP" id="MF_00182">
    <property type="entry name" value="Formyl_trans"/>
    <property type="match status" value="1"/>
</dbReference>
<dbReference type="InterPro" id="IPR005794">
    <property type="entry name" value="Fmt"/>
</dbReference>
<dbReference type="InterPro" id="IPR005793">
    <property type="entry name" value="Formyl_trans_C"/>
</dbReference>
<dbReference type="InterPro" id="IPR037022">
    <property type="entry name" value="Formyl_trans_C_sf"/>
</dbReference>
<dbReference type="InterPro" id="IPR002376">
    <property type="entry name" value="Formyl_transf_N"/>
</dbReference>
<dbReference type="InterPro" id="IPR036477">
    <property type="entry name" value="Formyl_transf_N_sf"/>
</dbReference>
<dbReference type="InterPro" id="IPR011034">
    <property type="entry name" value="Formyl_transferase-like_C_sf"/>
</dbReference>
<dbReference type="InterPro" id="IPR001555">
    <property type="entry name" value="GART_AS"/>
</dbReference>
<dbReference type="InterPro" id="IPR044135">
    <property type="entry name" value="Met-tRNA-FMT_C"/>
</dbReference>
<dbReference type="InterPro" id="IPR041711">
    <property type="entry name" value="Met-tRNA-FMT_N"/>
</dbReference>
<dbReference type="NCBIfam" id="TIGR00460">
    <property type="entry name" value="fmt"/>
    <property type="match status" value="1"/>
</dbReference>
<dbReference type="PANTHER" id="PTHR11138">
    <property type="entry name" value="METHIONYL-TRNA FORMYLTRANSFERASE"/>
    <property type="match status" value="1"/>
</dbReference>
<dbReference type="PANTHER" id="PTHR11138:SF5">
    <property type="entry name" value="METHIONYL-TRNA FORMYLTRANSFERASE, MITOCHONDRIAL"/>
    <property type="match status" value="1"/>
</dbReference>
<dbReference type="Pfam" id="PF02911">
    <property type="entry name" value="Formyl_trans_C"/>
    <property type="match status" value="1"/>
</dbReference>
<dbReference type="Pfam" id="PF00551">
    <property type="entry name" value="Formyl_trans_N"/>
    <property type="match status" value="1"/>
</dbReference>
<dbReference type="SUPFAM" id="SSF50486">
    <property type="entry name" value="FMT C-terminal domain-like"/>
    <property type="match status" value="1"/>
</dbReference>
<dbReference type="SUPFAM" id="SSF53328">
    <property type="entry name" value="Formyltransferase"/>
    <property type="match status" value="1"/>
</dbReference>
<dbReference type="PROSITE" id="PS00373">
    <property type="entry name" value="GART"/>
    <property type="match status" value="1"/>
</dbReference>
<name>FMT_SHEON</name>
<organism>
    <name type="scientific">Shewanella oneidensis (strain ATCC 700550 / JCM 31522 / CIP 106686 / LMG 19005 / NCIMB 14063 / MR-1)</name>
    <dbReference type="NCBI Taxonomy" id="211586"/>
    <lineage>
        <taxon>Bacteria</taxon>
        <taxon>Pseudomonadati</taxon>
        <taxon>Pseudomonadota</taxon>
        <taxon>Gammaproteobacteria</taxon>
        <taxon>Alteromonadales</taxon>
        <taxon>Shewanellaceae</taxon>
        <taxon>Shewanella</taxon>
    </lineage>
</organism>
<reference key="1">
    <citation type="journal article" date="2002" name="Nat. Biotechnol.">
        <title>Genome sequence of the dissimilatory metal ion-reducing bacterium Shewanella oneidensis.</title>
        <authorList>
            <person name="Heidelberg J.F."/>
            <person name="Paulsen I.T."/>
            <person name="Nelson K.E."/>
            <person name="Gaidos E.J."/>
            <person name="Nelson W.C."/>
            <person name="Read T.D."/>
            <person name="Eisen J.A."/>
            <person name="Seshadri R."/>
            <person name="Ward N.L."/>
            <person name="Methe B.A."/>
            <person name="Clayton R.A."/>
            <person name="Meyer T."/>
            <person name="Tsapin A."/>
            <person name="Scott J."/>
            <person name="Beanan M.J."/>
            <person name="Brinkac L.M."/>
            <person name="Daugherty S.C."/>
            <person name="DeBoy R.T."/>
            <person name="Dodson R.J."/>
            <person name="Durkin A.S."/>
            <person name="Haft D.H."/>
            <person name="Kolonay J.F."/>
            <person name="Madupu R."/>
            <person name="Peterson J.D."/>
            <person name="Umayam L.A."/>
            <person name="White O."/>
            <person name="Wolf A.M."/>
            <person name="Vamathevan J.J."/>
            <person name="Weidman J.F."/>
            <person name="Impraim M."/>
            <person name="Lee K."/>
            <person name="Berry K.J."/>
            <person name="Lee C."/>
            <person name="Mueller J."/>
            <person name="Khouri H.M."/>
            <person name="Gill J."/>
            <person name="Utterback T.R."/>
            <person name="McDonald L.A."/>
            <person name="Feldblyum T.V."/>
            <person name="Smith H.O."/>
            <person name="Venter J.C."/>
            <person name="Nealson K.H."/>
            <person name="Fraser C.M."/>
        </authorList>
    </citation>
    <scope>NUCLEOTIDE SEQUENCE [LARGE SCALE GENOMIC DNA]</scope>
    <source>
        <strain>ATCC 700550 / JCM 31522 / CIP 106686 / LMG 19005 / NCIMB 14063 / MR-1</strain>
    </source>
</reference>
<accession>Q8EKQ9</accession>
<proteinExistence type="inferred from homology"/>
<keyword id="KW-0648">Protein biosynthesis</keyword>
<keyword id="KW-1185">Reference proteome</keyword>
<keyword id="KW-0808">Transferase</keyword>
<comment type="function">
    <text evidence="1">Attaches a formyl group to the free amino group of methionyl-tRNA(fMet). The formyl group appears to play a dual role in the initiator identity of N-formylmethionyl-tRNA by promoting its recognition by IF2 and preventing the misappropriation of this tRNA by the elongation apparatus.</text>
</comment>
<comment type="catalytic activity">
    <reaction evidence="1">
        <text>L-methionyl-tRNA(fMet) + (6R)-10-formyltetrahydrofolate = N-formyl-L-methionyl-tRNA(fMet) + (6S)-5,6,7,8-tetrahydrofolate + H(+)</text>
        <dbReference type="Rhea" id="RHEA:24380"/>
        <dbReference type="Rhea" id="RHEA-COMP:9952"/>
        <dbReference type="Rhea" id="RHEA-COMP:9953"/>
        <dbReference type="ChEBI" id="CHEBI:15378"/>
        <dbReference type="ChEBI" id="CHEBI:57453"/>
        <dbReference type="ChEBI" id="CHEBI:78530"/>
        <dbReference type="ChEBI" id="CHEBI:78844"/>
        <dbReference type="ChEBI" id="CHEBI:195366"/>
        <dbReference type="EC" id="2.1.2.9"/>
    </reaction>
</comment>
<comment type="similarity">
    <text evidence="1">Belongs to the Fmt family.</text>
</comment>
<sequence length="318" mass="34594">MKPLNIIFAGTPDFAARHLQALINSHHNVIAVYTQPDRPAGRGKKLTASPVKELALSHSIPVYQPGSLRKEPAQQELASLNADIMVVVAYGLILPKVVLDTPRLGCINVHGSILPRWRGAAPIQRALWAGDKETGVTIMQMDVGLDTGDMLLKTYLPIEDDDTSASLYEKLALQGPDALLQALEGLANGTLAAEKQDETLANYAEKLSKEEARLDWTKSATQLWQEVRAFNPWPVSYFEHQGNTIKVWQTQVSTTSSTAAPGTIINASKKGIDVSTGDGVLTLLSMQLPGKKPLSVADILNARGEWFTPNTRLNNEAQ</sequence>
<gene>
    <name evidence="1" type="primary">fmt</name>
    <name type="ordered locus">SO_0031</name>
</gene>
<feature type="chain" id="PRO_0000083042" description="Methionyl-tRNA formyltransferase">
    <location>
        <begin position="1"/>
        <end position="318"/>
    </location>
</feature>
<feature type="binding site" evidence="1">
    <location>
        <begin position="112"/>
        <end position="115"/>
    </location>
    <ligand>
        <name>(6S)-5,6,7,8-tetrahydrofolate</name>
        <dbReference type="ChEBI" id="CHEBI:57453"/>
    </ligand>
</feature>
<evidence type="ECO:0000255" key="1">
    <source>
        <dbReference type="HAMAP-Rule" id="MF_00182"/>
    </source>
</evidence>
<protein>
    <recommendedName>
        <fullName evidence="1">Methionyl-tRNA formyltransferase</fullName>
        <ecNumber evidence="1">2.1.2.9</ecNumber>
    </recommendedName>
</protein>